<gene>
    <name evidence="1" type="primary">rplX</name>
    <name type="ordered locus">NE0412</name>
</gene>
<feature type="chain" id="PRO_0000130687" description="Large ribosomal subunit protein uL24">
    <location>
        <begin position="1"/>
        <end position="105"/>
    </location>
</feature>
<sequence length="105" mass="11806">MKKIRKGDSVIVIAGKDKGKQSTVIRFQSTERVIVREVNKVKSHIKPNPNRNIAGGIVETEKPLHISNIAIFNPEKNKADRVGFRFNESGNKVRYFKSDGTLIDS</sequence>
<proteinExistence type="inferred from homology"/>
<comment type="function">
    <text evidence="1">One of two assembly initiator proteins, it binds directly to the 5'-end of the 23S rRNA, where it nucleates assembly of the 50S subunit.</text>
</comment>
<comment type="function">
    <text evidence="1">One of the proteins that surrounds the polypeptide exit tunnel on the outside of the subunit.</text>
</comment>
<comment type="subunit">
    <text evidence="1">Part of the 50S ribosomal subunit.</text>
</comment>
<comment type="similarity">
    <text evidence="1">Belongs to the universal ribosomal protein uL24 family.</text>
</comment>
<evidence type="ECO:0000255" key="1">
    <source>
        <dbReference type="HAMAP-Rule" id="MF_01326"/>
    </source>
</evidence>
<evidence type="ECO:0000305" key="2"/>
<protein>
    <recommendedName>
        <fullName evidence="1">Large ribosomal subunit protein uL24</fullName>
    </recommendedName>
    <alternativeName>
        <fullName evidence="2">50S ribosomal protein L24</fullName>
    </alternativeName>
</protein>
<name>RL24_NITEU</name>
<organism>
    <name type="scientific">Nitrosomonas europaea (strain ATCC 19718 / CIP 103999 / KCTC 2705 / NBRC 14298)</name>
    <dbReference type="NCBI Taxonomy" id="228410"/>
    <lineage>
        <taxon>Bacteria</taxon>
        <taxon>Pseudomonadati</taxon>
        <taxon>Pseudomonadota</taxon>
        <taxon>Betaproteobacteria</taxon>
        <taxon>Nitrosomonadales</taxon>
        <taxon>Nitrosomonadaceae</taxon>
        <taxon>Nitrosomonas</taxon>
    </lineage>
</organism>
<keyword id="KW-1185">Reference proteome</keyword>
<keyword id="KW-0687">Ribonucleoprotein</keyword>
<keyword id="KW-0689">Ribosomal protein</keyword>
<keyword id="KW-0694">RNA-binding</keyword>
<keyword id="KW-0699">rRNA-binding</keyword>
<accession>Q820R0</accession>
<reference key="1">
    <citation type="journal article" date="2003" name="J. Bacteriol.">
        <title>Complete genome sequence of the ammonia-oxidizing bacterium and obligate chemolithoautotroph Nitrosomonas europaea.</title>
        <authorList>
            <person name="Chain P."/>
            <person name="Lamerdin J.E."/>
            <person name="Larimer F.W."/>
            <person name="Regala W."/>
            <person name="Lao V."/>
            <person name="Land M.L."/>
            <person name="Hauser L."/>
            <person name="Hooper A.B."/>
            <person name="Klotz M.G."/>
            <person name="Norton J."/>
            <person name="Sayavedra-Soto L.A."/>
            <person name="Arciero D.M."/>
            <person name="Hommes N.G."/>
            <person name="Whittaker M.M."/>
            <person name="Arp D.J."/>
        </authorList>
    </citation>
    <scope>NUCLEOTIDE SEQUENCE [LARGE SCALE GENOMIC DNA]</scope>
    <source>
        <strain>ATCC 19718 / CIP 103999 / KCTC 2705 / NBRC 14298</strain>
    </source>
</reference>
<dbReference type="EMBL" id="AL954747">
    <property type="protein sequence ID" value="CAD84323.1"/>
    <property type="molecule type" value="Genomic_DNA"/>
</dbReference>
<dbReference type="RefSeq" id="WP_011111047.1">
    <property type="nucleotide sequence ID" value="NC_004757.1"/>
</dbReference>
<dbReference type="SMR" id="Q820R0"/>
<dbReference type="STRING" id="228410.NE0412"/>
<dbReference type="GeneID" id="87103621"/>
<dbReference type="KEGG" id="neu:NE0412"/>
<dbReference type="eggNOG" id="COG0198">
    <property type="taxonomic scope" value="Bacteria"/>
</dbReference>
<dbReference type="HOGENOM" id="CLU_093315_2_2_4"/>
<dbReference type="OrthoDB" id="9807419at2"/>
<dbReference type="PhylomeDB" id="Q820R0"/>
<dbReference type="Proteomes" id="UP000001416">
    <property type="component" value="Chromosome"/>
</dbReference>
<dbReference type="GO" id="GO:1990904">
    <property type="term" value="C:ribonucleoprotein complex"/>
    <property type="evidence" value="ECO:0007669"/>
    <property type="project" value="UniProtKB-KW"/>
</dbReference>
<dbReference type="GO" id="GO:0005840">
    <property type="term" value="C:ribosome"/>
    <property type="evidence" value="ECO:0007669"/>
    <property type="project" value="UniProtKB-KW"/>
</dbReference>
<dbReference type="GO" id="GO:0019843">
    <property type="term" value="F:rRNA binding"/>
    <property type="evidence" value="ECO:0007669"/>
    <property type="project" value="UniProtKB-UniRule"/>
</dbReference>
<dbReference type="GO" id="GO:0003735">
    <property type="term" value="F:structural constituent of ribosome"/>
    <property type="evidence" value="ECO:0007669"/>
    <property type="project" value="InterPro"/>
</dbReference>
<dbReference type="GO" id="GO:0006412">
    <property type="term" value="P:translation"/>
    <property type="evidence" value="ECO:0007669"/>
    <property type="project" value="UniProtKB-UniRule"/>
</dbReference>
<dbReference type="CDD" id="cd06089">
    <property type="entry name" value="KOW_RPL26"/>
    <property type="match status" value="1"/>
</dbReference>
<dbReference type="FunFam" id="2.30.30.30:FF:000004">
    <property type="entry name" value="50S ribosomal protein L24"/>
    <property type="match status" value="1"/>
</dbReference>
<dbReference type="Gene3D" id="2.30.30.30">
    <property type="match status" value="1"/>
</dbReference>
<dbReference type="HAMAP" id="MF_01326_B">
    <property type="entry name" value="Ribosomal_uL24_B"/>
    <property type="match status" value="1"/>
</dbReference>
<dbReference type="InterPro" id="IPR014722">
    <property type="entry name" value="Rib_uL2_dom2"/>
</dbReference>
<dbReference type="InterPro" id="IPR003256">
    <property type="entry name" value="Ribosomal_uL24"/>
</dbReference>
<dbReference type="InterPro" id="IPR041988">
    <property type="entry name" value="Ribosomal_uL24_KOW"/>
</dbReference>
<dbReference type="InterPro" id="IPR008991">
    <property type="entry name" value="Translation_prot_SH3-like_sf"/>
</dbReference>
<dbReference type="NCBIfam" id="TIGR01079">
    <property type="entry name" value="rplX_bact"/>
    <property type="match status" value="1"/>
</dbReference>
<dbReference type="PANTHER" id="PTHR12903">
    <property type="entry name" value="MITOCHONDRIAL RIBOSOMAL PROTEIN L24"/>
    <property type="match status" value="1"/>
</dbReference>
<dbReference type="Pfam" id="PF17136">
    <property type="entry name" value="ribosomal_L24"/>
    <property type="match status" value="1"/>
</dbReference>
<dbReference type="SUPFAM" id="SSF50104">
    <property type="entry name" value="Translation proteins SH3-like domain"/>
    <property type="match status" value="1"/>
</dbReference>